<dbReference type="EC" id="6.3.2.-" evidence="1"/>
<dbReference type="EMBL" id="CP001233">
    <property type="protein sequence ID" value="ACP06505.1"/>
    <property type="molecule type" value="Genomic_DNA"/>
</dbReference>
<dbReference type="RefSeq" id="WP_000689982.1">
    <property type="nucleotide sequence ID" value="NC_012578.1"/>
</dbReference>
<dbReference type="SMR" id="C3LQ53"/>
<dbReference type="GeneID" id="89513725"/>
<dbReference type="KEGG" id="vcm:VCM66_2204"/>
<dbReference type="HOGENOM" id="CLU_054353_0_1_6"/>
<dbReference type="Proteomes" id="UP000001217">
    <property type="component" value="Chromosome I"/>
</dbReference>
<dbReference type="GO" id="GO:0005737">
    <property type="term" value="C:cytoplasm"/>
    <property type="evidence" value="ECO:0007669"/>
    <property type="project" value="TreeGrafter"/>
</dbReference>
<dbReference type="GO" id="GO:0005524">
    <property type="term" value="F:ATP binding"/>
    <property type="evidence" value="ECO:0007669"/>
    <property type="project" value="UniProtKB-UniRule"/>
</dbReference>
<dbReference type="GO" id="GO:0046872">
    <property type="term" value="F:metal ion binding"/>
    <property type="evidence" value="ECO:0007669"/>
    <property type="project" value="UniProtKB-KW"/>
</dbReference>
<dbReference type="GO" id="GO:0018169">
    <property type="term" value="F:ribosomal S6-glutamic acid ligase activity"/>
    <property type="evidence" value="ECO:0007669"/>
    <property type="project" value="TreeGrafter"/>
</dbReference>
<dbReference type="GO" id="GO:0036211">
    <property type="term" value="P:protein modification process"/>
    <property type="evidence" value="ECO:0007669"/>
    <property type="project" value="InterPro"/>
</dbReference>
<dbReference type="GO" id="GO:0009432">
    <property type="term" value="P:SOS response"/>
    <property type="evidence" value="ECO:0007669"/>
    <property type="project" value="TreeGrafter"/>
</dbReference>
<dbReference type="GO" id="GO:0006412">
    <property type="term" value="P:translation"/>
    <property type="evidence" value="ECO:0007669"/>
    <property type="project" value="UniProtKB-KW"/>
</dbReference>
<dbReference type="FunFam" id="3.40.50.20:FF:000004">
    <property type="entry name" value="Probable alpha-L-glutamate ligase"/>
    <property type="match status" value="1"/>
</dbReference>
<dbReference type="FunFam" id="3.30.1490.20:FF:000005">
    <property type="entry name" value="Probable alpha-L-glutamate ligase 1"/>
    <property type="match status" value="1"/>
</dbReference>
<dbReference type="FunFam" id="3.30.470.20:FF:000016">
    <property type="entry name" value="Ribosomal protein S6--L-glutamate ligase"/>
    <property type="match status" value="1"/>
</dbReference>
<dbReference type="Gene3D" id="3.40.50.20">
    <property type="match status" value="1"/>
</dbReference>
<dbReference type="Gene3D" id="3.30.1490.20">
    <property type="entry name" value="ATP-grasp fold, A domain"/>
    <property type="match status" value="1"/>
</dbReference>
<dbReference type="Gene3D" id="3.30.470.20">
    <property type="entry name" value="ATP-grasp fold, B domain"/>
    <property type="match status" value="1"/>
</dbReference>
<dbReference type="HAMAP" id="MF_01552">
    <property type="entry name" value="RimK"/>
    <property type="match status" value="1"/>
</dbReference>
<dbReference type="InterPro" id="IPR011761">
    <property type="entry name" value="ATP-grasp"/>
</dbReference>
<dbReference type="InterPro" id="IPR013651">
    <property type="entry name" value="ATP-grasp_RimK-type"/>
</dbReference>
<dbReference type="InterPro" id="IPR013815">
    <property type="entry name" value="ATP_grasp_subdomain_1"/>
</dbReference>
<dbReference type="InterPro" id="IPR023533">
    <property type="entry name" value="RimK"/>
</dbReference>
<dbReference type="InterPro" id="IPR041107">
    <property type="entry name" value="Rimk_N"/>
</dbReference>
<dbReference type="InterPro" id="IPR004666">
    <property type="entry name" value="Rp_bS6_RimK/Lys_biosynth_LsyX"/>
</dbReference>
<dbReference type="NCBIfam" id="NF007764">
    <property type="entry name" value="PRK10446.1"/>
    <property type="match status" value="1"/>
</dbReference>
<dbReference type="NCBIfam" id="TIGR00768">
    <property type="entry name" value="rimK_fam"/>
    <property type="match status" value="1"/>
</dbReference>
<dbReference type="PANTHER" id="PTHR21621:SF7">
    <property type="entry name" value="RIBOSOMAL PROTEIN BS6--L-GLUTAMATE LIGASE"/>
    <property type="match status" value="1"/>
</dbReference>
<dbReference type="PANTHER" id="PTHR21621">
    <property type="entry name" value="RIBOSOMAL PROTEIN S6 MODIFICATION PROTEIN"/>
    <property type="match status" value="1"/>
</dbReference>
<dbReference type="Pfam" id="PF08443">
    <property type="entry name" value="RimK"/>
    <property type="match status" value="1"/>
</dbReference>
<dbReference type="Pfam" id="PF18030">
    <property type="entry name" value="Rimk_N"/>
    <property type="match status" value="1"/>
</dbReference>
<dbReference type="SUPFAM" id="SSF56059">
    <property type="entry name" value="Glutathione synthetase ATP-binding domain-like"/>
    <property type="match status" value="1"/>
</dbReference>
<dbReference type="PROSITE" id="PS50975">
    <property type="entry name" value="ATP_GRASP"/>
    <property type="match status" value="1"/>
</dbReference>
<protein>
    <recommendedName>
        <fullName evidence="1">Probable alpha-L-glutamate ligase</fullName>
        <ecNumber evidence="1">6.3.2.-</ecNumber>
    </recommendedName>
</protein>
<keyword id="KW-0067">ATP-binding</keyword>
<keyword id="KW-0436">Ligase</keyword>
<keyword id="KW-0460">Magnesium</keyword>
<keyword id="KW-0464">Manganese</keyword>
<keyword id="KW-0479">Metal-binding</keyword>
<keyword id="KW-0547">Nucleotide-binding</keyword>
<keyword id="KW-0648">Protein biosynthesis</keyword>
<name>RIMK_VIBCM</name>
<reference key="1">
    <citation type="journal article" date="2008" name="PLoS ONE">
        <title>A recalibrated molecular clock and independent origins for the cholera pandemic clones.</title>
        <authorList>
            <person name="Feng L."/>
            <person name="Reeves P.R."/>
            <person name="Lan R."/>
            <person name="Ren Y."/>
            <person name="Gao C."/>
            <person name="Zhou Z."/>
            <person name="Ren Y."/>
            <person name="Cheng J."/>
            <person name="Wang W."/>
            <person name="Wang J."/>
            <person name="Qian W."/>
            <person name="Li D."/>
            <person name="Wang L."/>
        </authorList>
    </citation>
    <scope>NUCLEOTIDE SEQUENCE [LARGE SCALE GENOMIC DNA]</scope>
    <source>
        <strain>M66-2</strain>
    </source>
</reference>
<feature type="chain" id="PRO_1000185328" description="Probable alpha-L-glutamate ligase">
    <location>
        <begin position="1"/>
        <end position="301"/>
    </location>
</feature>
<feature type="domain" description="ATP-grasp" evidence="1">
    <location>
        <begin position="104"/>
        <end position="287"/>
    </location>
</feature>
<feature type="binding site" evidence="1">
    <location>
        <position position="141"/>
    </location>
    <ligand>
        <name>ATP</name>
        <dbReference type="ChEBI" id="CHEBI:30616"/>
    </ligand>
</feature>
<feature type="binding site" evidence="1">
    <location>
        <begin position="178"/>
        <end position="179"/>
    </location>
    <ligand>
        <name>ATP</name>
        <dbReference type="ChEBI" id="CHEBI:30616"/>
    </ligand>
</feature>
<feature type="binding site" evidence="1">
    <location>
        <position position="187"/>
    </location>
    <ligand>
        <name>ATP</name>
        <dbReference type="ChEBI" id="CHEBI:30616"/>
    </ligand>
</feature>
<feature type="binding site" evidence="1">
    <location>
        <begin position="211"/>
        <end position="213"/>
    </location>
    <ligand>
        <name>ATP</name>
        <dbReference type="ChEBI" id="CHEBI:30616"/>
    </ligand>
</feature>
<feature type="binding site" evidence="1">
    <location>
        <position position="248"/>
    </location>
    <ligand>
        <name>Mg(2+)</name>
        <dbReference type="ChEBI" id="CHEBI:18420"/>
        <label>1</label>
    </ligand>
</feature>
<feature type="binding site" evidence="1">
    <location>
        <position position="248"/>
    </location>
    <ligand>
        <name>Mn(2+)</name>
        <dbReference type="ChEBI" id="CHEBI:29035"/>
        <label>1</label>
    </ligand>
</feature>
<feature type="binding site" evidence="1">
    <location>
        <position position="260"/>
    </location>
    <ligand>
        <name>Mg(2+)</name>
        <dbReference type="ChEBI" id="CHEBI:18420"/>
        <label>1</label>
    </ligand>
</feature>
<feature type="binding site" evidence="1">
    <location>
        <position position="260"/>
    </location>
    <ligand>
        <name>Mg(2+)</name>
        <dbReference type="ChEBI" id="CHEBI:18420"/>
        <label>2</label>
    </ligand>
</feature>
<feature type="binding site" evidence="1">
    <location>
        <position position="260"/>
    </location>
    <ligand>
        <name>Mn(2+)</name>
        <dbReference type="ChEBI" id="CHEBI:29035"/>
        <label>1</label>
    </ligand>
</feature>
<feature type="binding site" evidence="1">
    <location>
        <position position="260"/>
    </location>
    <ligand>
        <name>Mn(2+)</name>
        <dbReference type="ChEBI" id="CHEBI:29035"/>
        <label>2</label>
    </ligand>
</feature>
<feature type="binding site" evidence="1">
    <location>
        <position position="262"/>
    </location>
    <ligand>
        <name>Mg(2+)</name>
        <dbReference type="ChEBI" id="CHEBI:18420"/>
        <label>2</label>
    </ligand>
</feature>
<feature type="binding site" evidence="1">
    <location>
        <position position="262"/>
    </location>
    <ligand>
        <name>Mn(2+)</name>
        <dbReference type="ChEBI" id="CHEBI:29035"/>
        <label>2</label>
    </ligand>
</feature>
<organism>
    <name type="scientific">Vibrio cholerae serotype O1 (strain M66-2)</name>
    <dbReference type="NCBI Taxonomy" id="579112"/>
    <lineage>
        <taxon>Bacteria</taxon>
        <taxon>Pseudomonadati</taxon>
        <taxon>Pseudomonadota</taxon>
        <taxon>Gammaproteobacteria</taxon>
        <taxon>Vibrionales</taxon>
        <taxon>Vibrionaceae</taxon>
        <taxon>Vibrio</taxon>
    </lineage>
</organism>
<sequence>MKIGILSRNASLYSTKRLIEACKQRGHEVRVIDALRCYMNINSDKPEIHYKGEELAGFDAVIPRIGASVTFYGTAVLRQFEMMGVYPANESVAITRSRDKLRSMQLLSRRGIGMPITGFASKPDDVKDLLDMVGGAPVVIKLLEGTQGIGVVLAETRTAAESVIEAFMGLKANIMVQEYIKEAGGADIRCFVIGDKVIAAMKRQGADGEFRSNLHRGGTASLVKITPQERKTAIEAAKIMGLNVAGVDLLRSARGPLVMEVNSSPGLEGIEAATGKDIAGMIVEFIEKNAASKRTKTRGKG</sequence>
<proteinExistence type="inferred from homology"/>
<evidence type="ECO:0000255" key="1">
    <source>
        <dbReference type="HAMAP-Rule" id="MF_01552"/>
    </source>
</evidence>
<gene>
    <name evidence="1" type="primary">rimK</name>
    <name type="ordered locus">VCM66_2204</name>
</gene>
<comment type="cofactor">
    <cofactor evidence="1">
        <name>Mg(2+)</name>
        <dbReference type="ChEBI" id="CHEBI:18420"/>
    </cofactor>
    <cofactor evidence="1">
        <name>Mn(2+)</name>
        <dbReference type="ChEBI" id="CHEBI:29035"/>
    </cofactor>
    <text evidence="1">Binds 2 magnesium or manganese ions per subunit.</text>
</comment>
<comment type="similarity">
    <text evidence="1">Belongs to the RimK family.</text>
</comment>
<accession>C3LQ53</accession>